<dbReference type="EMBL" id="HQ128616">
    <property type="protein sequence ID" value="ADM34274.1"/>
    <property type="molecule type" value="mRNA"/>
</dbReference>
<dbReference type="GO" id="GO:0005576">
    <property type="term" value="C:extracellular region"/>
    <property type="evidence" value="ECO:0007669"/>
    <property type="project" value="UniProtKB-SubCell"/>
</dbReference>
<dbReference type="GO" id="GO:0042742">
    <property type="term" value="P:defense response to bacterium"/>
    <property type="evidence" value="ECO:0007669"/>
    <property type="project" value="UniProtKB-KW"/>
</dbReference>
<dbReference type="GO" id="GO:0050832">
    <property type="term" value="P:defense response to fungus"/>
    <property type="evidence" value="ECO:0007669"/>
    <property type="project" value="UniProtKB-KW"/>
</dbReference>
<dbReference type="GO" id="GO:0045087">
    <property type="term" value="P:innate immune response"/>
    <property type="evidence" value="ECO:0007669"/>
    <property type="project" value="UniProtKB-KW"/>
</dbReference>
<dbReference type="GO" id="GO:0031640">
    <property type="term" value="P:killing of cells of another organism"/>
    <property type="evidence" value="ECO:0007669"/>
    <property type="project" value="UniProtKB-KW"/>
</dbReference>
<dbReference type="InterPro" id="IPR012520">
    <property type="entry name" value="Antimicrobial_frog_1"/>
</dbReference>
<dbReference type="InterPro" id="IPR004275">
    <property type="entry name" value="Frog_antimicrobial_propeptide"/>
</dbReference>
<dbReference type="Pfam" id="PF08018">
    <property type="entry name" value="Antimicrobial_1"/>
    <property type="match status" value="1"/>
</dbReference>
<dbReference type="Pfam" id="PF03032">
    <property type="entry name" value="FSAP_sig_propep"/>
    <property type="match status" value="1"/>
</dbReference>
<proteinExistence type="evidence at protein level"/>
<sequence>MFTLKKSMLLLFFLGTINLSLCEQERNADEEERRDDDEMDVEVEKRFLPMLAGLAANFLPKLFCKITKKC</sequence>
<comment type="function">
    <text evidence="1">Antimicrobial peptide with activity against a variety of Gram-negative and Gram-positive bacteria and against fungi (By similarity). Shows strong hemolytic activity against human erythrocytes (By similarity).</text>
</comment>
<comment type="subcellular location">
    <subcellularLocation>
        <location evidence="3">Secreted</location>
    </subcellularLocation>
</comment>
<comment type="tissue specificity">
    <text evidence="6">Expressed by the skin glands.</text>
</comment>
<comment type="miscellaneous">
    <text evidence="5">The primary structure of this peptide is identical to that of Brevinins-ALa (AC A0SN38).</text>
</comment>
<comment type="similarity">
    <text evidence="5">Belongs to the frog skin active peptide (FSAP) family. Brevinin subfamily.</text>
</comment>
<comment type="online information" name="The antimicrobial peptide database">
    <link uri="https://wangapd3.com/database/query_output.php?ID=00860"/>
</comment>
<accession>E1B241</accession>
<organism>
    <name type="scientific">Amolops mantzorum</name>
    <name type="common">Sichuan torrent frog</name>
    <dbReference type="NCBI Taxonomy" id="167930"/>
    <lineage>
        <taxon>Eukaryota</taxon>
        <taxon>Metazoa</taxon>
        <taxon>Chordata</taxon>
        <taxon>Craniata</taxon>
        <taxon>Vertebrata</taxon>
        <taxon>Euteleostomi</taxon>
        <taxon>Amphibia</taxon>
        <taxon>Batrachia</taxon>
        <taxon>Anura</taxon>
        <taxon>Neobatrachia</taxon>
        <taxon>Ranoidea</taxon>
        <taxon>Ranidae</taxon>
        <taxon>Amolops</taxon>
    </lineage>
</organism>
<name>BR12_AMOMA</name>
<evidence type="ECO:0000250" key="1">
    <source>
        <dbReference type="UniProtKB" id="E1B240"/>
    </source>
</evidence>
<evidence type="ECO:0000255" key="2"/>
<evidence type="ECO:0000269" key="3">
    <source>
    </source>
</evidence>
<evidence type="ECO:0000303" key="4">
    <source>
    </source>
</evidence>
<evidence type="ECO:0000305" key="5"/>
<evidence type="ECO:0000305" key="6">
    <source>
    </source>
</evidence>
<reference key="1">
    <citation type="journal article" date="2014" name="Zool. Sci.">
        <title>Peptidomic analysis of antimicrobial peptides in skin secretions of Amolops mantzorum.</title>
        <authorList>
            <person name="Hu Y."/>
            <person name="Yu Z."/>
            <person name="Xu S."/>
            <person name="Hu Y."/>
            <person name="Guo C."/>
            <person name="Li F."/>
            <person name="Li J."/>
            <person name="Liu J."/>
            <person name="Wang H."/>
        </authorList>
    </citation>
    <scope>NUCLEOTIDE SEQUENCE [MRNA]</scope>
    <scope>PROTEIN SEQUENCE OF 47-70</scope>
    <scope>SUBCELLULAR LOCATION</scope>
    <scope>DISULFIDE BOND</scope>
    <scope>IDENTIFICATION BY MASS SPECTROMETRY</scope>
    <source>
        <tissue>Skin</tissue>
        <tissue>Skin secretion</tissue>
    </source>
</reference>
<keyword id="KW-0878">Amphibian defense peptide</keyword>
<keyword id="KW-0044">Antibiotic</keyword>
<keyword id="KW-0929">Antimicrobial</keyword>
<keyword id="KW-0165">Cleavage on pair of basic residues</keyword>
<keyword id="KW-0204">Cytolysis</keyword>
<keyword id="KW-0903">Direct protein sequencing</keyword>
<keyword id="KW-1015">Disulfide bond</keyword>
<keyword id="KW-0295">Fungicide</keyword>
<keyword id="KW-0354">Hemolysis</keyword>
<keyword id="KW-0391">Immunity</keyword>
<keyword id="KW-0399">Innate immunity</keyword>
<keyword id="KW-0964">Secreted</keyword>
<keyword id="KW-0732">Signal</keyword>
<feature type="signal peptide" evidence="2">
    <location>
        <begin position="1"/>
        <end position="22"/>
    </location>
</feature>
<feature type="propeptide" id="PRO_0000440076" evidence="6">
    <location>
        <begin position="23"/>
        <end position="44"/>
    </location>
</feature>
<feature type="peptide" id="PRO_0000440077" description="Brevinin-1MT2" evidence="3">
    <location>
        <begin position="47"/>
        <end position="70"/>
    </location>
</feature>
<feature type="disulfide bond" evidence="3">
    <location>
        <begin position="64"/>
        <end position="70"/>
    </location>
</feature>
<protein>
    <recommendedName>
        <fullName evidence="4">Brevinin-1MT2</fullName>
    </recommendedName>
</protein>